<dbReference type="EC" id="6.2.1.1" evidence="1"/>
<dbReference type="EMBL" id="CP001217">
    <property type="protein sequence ID" value="ACJ07556.1"/>
    <property type="molecule type" value="Genomic_DNA"/>
</dbReference>
<dbReference type="SMR" id="B6JKX8"/>
<dbReference type="KEGG" id="hpp:HPP12_0399"/>
<dbReference type="HOGENOM" id="CLU_000022_3_6_7"/>
<dbReference type="Proteomes" id="UP000008198">
    <property type="component" value="Chromosome"/>
</dbReference>
<dbReference type="GO" id="GO:0005829">
    <property type="term" value="C:cytosol"/>
    <property type="evidence" value="ECO:0007669"/>
    <property type="project" value="TreeGrafter"/>
</dbReference>
<dbReference type="GO" id="GO:0003987">
    <property type="term" value="F:acetate-CoA ligase activity"/>
    <property type="evidence" value="ECO:0007669"/>
    <property type="project" value="UniProtKB-UniRule"/>
</dbReference>
<dbReference type="GO" id="GO:0016208">
    <property type="term" value="F:AMP binding"/>
    <property type="evidence" value="ECO:0007669"/>
    <property type="project" value="InterPro"/>
</dbReference>
<dbReference type="GO" id="GO:0005524">
    <property type="term" value="F:ATP binding"/>
    <property type="evidence" value="ECO:0007669"/>
    <property type="project" value="UniProtKB-KW"/>
</dbReference>
<dbReference type="GO" id="GO:0046872">
    <property type="term" value="F:metal ion binding"/>
    <property type="evidence" value="ECO:0007669"/>
    <property type="project" value="UniProtKB-KW"/>
</dbReference>
<dbReference type="GO" id="GO:0019427">
    <property type="term" value="P:acetyl-CoA biosynthetic process from acetate"/>
    <property type="evidence" value="ECO:0007669"/>
    <property type="project" value="InterPro"/>
</dbReference>
<dbReference type="CDD" id="cd05966">
    <property type="entry name" value="ACS"/>
    <property type="match status" value="1"/>
</dbReference>
<dbReference type="FunFam" id="3.40.50.12780:FF:000001">
    <property type="entry name" value="Acetyl-coenzyme A synthetase"/>
    <property type="match status" value="1"/>
</dbReference>
<dbReference type="Gene3D" id="3.30.300.30">
    <property type="match status" value="1"/>
</dbReference>
<dbReference type="Gene3D" id="3.40.50.12780">
    <property type="entry name" value="N-terminal domain of ligase-like"/>
    <property type="match status" value="1"/>
</dbReference>
<dbReference type="HAMAP" id="MF_01123">
    <property type="entry name" value="Ac_CoA_synth"/>
    <property type="match status" value="1"/>
</dbReference>
<dbReference type="InterPro" id="IPR011904">
    <property type="entry name" value="Ac_CoA_lig"/>
</dbReference>
<dbReference type="InterPro" id="IPR032387">
    <property type="entry name" value="ACAS_N"/>
</dbReference>
<dbReference type="InterPro" id="IPR025110">
    <property type="entry name" value="AMP-bd_C"/>
</dbReference>
<dbReference type="InterPro" id="IPR045851">
    <property type="entry name" value="AMP-bd_C_sf"/>
</dbReference>
<dbReference type="InterPro" id="IPR020845">
    <property type="entry name" value="AMP-binding_CS"/>
</dbReference>
<dbReference type="InterPro" id="IPR000873">
    <property type="entry name" value="AMP-dep_synth/lig_dom"/>
</dbReference>
<dbReference type="InterPro" id="IPR042099">
    <property type="entry name" value="ANL_N_sf"/>
</dbReference>
<dbReference type="NCBIfam" id="TIGR02188">
    <property type="entry name" value="Ac_CoA_lig_AcsA"/>
    <property type="match status" value="1"/>
</dbReference>
<dbReference type="NCBIfam" id="NF001208">
    <property type="entry name" value="PRK00174.1"/>
    <property type="match status" value="1"/>
</dbReference>
<dbReference type="PANTHER" id="PTHR24095">
    <property type="entry name" value="ACETYL-COENZYME A SYNTHETASE"/>
    <property type="match status" value="1"/>
</dbReference>
<dbReference type="PANTHER" id="PTHR24095:SF14">
    <property type="entry name" value="ACETYL-COENZYME A SYNTHETASE 1"/>
    <property type="match status" value="1"/>
</dbReference>
<dbReference type="Pfam" id="PF16177">
    <property type="entry name" value="ACAS_N"/>
    <property type="match status" value="1"/>
</dbReference>
<dbReference type="Pfam" id="PF00501">
    <property type="entry name" value="AMP-binding"/>
    <property type="match status" value="1"/>
</dbReference>
<dbReference type="Pfam" id="PF13193">
    <property type="entry name" value="AMP-binding_C"/>
    <property type="match status" value="1"/>
</dbReference>
<dbReference type="SUPFAM" id="SSF56801">
    <property type="entry name" value="Acetyl-CoA synthetase-like"/>
    <property type="match status" value="1"/>
</dbReference>
<dbReference type="PROSITE" id="PS00455">
    <property type="entry name" value="AMP_BINDING"/>
    <property type="match status" value="1"/>
</dbReference>
<proteinExistence type="inferred from homology"/>
<reference key="1">
    <citation type="submission" date="2008-10" db="EMBL/GenBank/DDBJ databases">
        <title>The complete genome sequence of Helicobacter pylori strain P12.</title>
        <authorList>
            <person name="Fischer W."/>
            <person name="Windhager L."/>
            <person name="Karnholz A."/>
            <person name="Zeiller M."/>
            <person name="Zimmer R."/>
            <person name="Haas R."/>
        </authorList>
    </citation>
    <scope>NUCLEOTIDE SEQUENCE [LARGE SCALE GENOMIC DNA]</scope>
    <source>
        <strain>P12</strain>
    </source>
</reference>
<sequence length="662" mass="75044">MQLDEDLEFAKKIFNPNRAFAKQARIKNMCEYKDLVHEANEDYEHFWGELAKQKLTWFKPFDKVLNSDNAPFFKWFENGKINVSYNCIDRHLKDKKNKVAIIFEGEMGDYNVITYRKLHSEVNKTANLLKNEFNVKKGDRVIIYMPMIVESVYMMLACARIGAIHSIVFAGFSPEALRDRINDAQAKLVITADGTFRKGKPYMLKPALDKALENNACPSVEKALIVIRNAREIDYVRGRDFVYNEMVNYQSDKCEPEMMDSEDPLFLLYTSGSTGKPKGVQHSSAGYLLWAQMTMEWVFDIRDNDNFWCTADIGWITGHTYVVYGPLACGATTLILEGTMSYPDYGRWWRMIEEYRVDKFYTSPTAIRMLHAKGENEPLKYNLESLKVLGTVGEPINPTAWKWFYEKIGNSKCSIVDTWWQTETGGHIISPLPGATPIRASCATLPLPGIHAEVLNEDGTKTKPGEQGFLCITKPWPSMVRNIWGDEKRYIDSYFSQIKLNGEYVYLSGDGAIVDENGYITIIGRTDDIVNVSGHRIGTAEVESAISKHEMVVECAVVGIPDTIKGEGLFAFVVLCDGAKCNLGESLELLKEMNHILSVEIGKIAKLDNVMYVPGLPKTRSGKIMRRLLKSIAKKEPITQDLSTLEDVNVVKEIMSIVQMEE</sequence>
<feature type="chain" id="PRO_1000137264" description="Acetyl-coenzyme A synthetase">
    <location>
        <begin position="1"/>
        <end position="662"/>
    </location>
</feature>
<feature type="binding site" evidence="1">
    <location>
        <begin position="197"/>
        <end position="200"/>
    </location>
    <ligand>
        <name>CoA</name>
        <dbReference type="ChEBI" id="CHEBI:57287"/>
    </ligand>
</feature>
<feature type="binding site" evidence="1">
    <location>
        <position position="317"/>
    </location>
    <ligand>
        <name>CoA</name>
        <dbReference type="ChEBI" id="CHEBI:57287"/>
    </ligand>
</feature>
<feature type="binding site" evidence="1">
    <location>
        <begin position="393"/>
        <end position="395"/>
    </location>
    <ligand>
        <name>ATP</name>
        <dbReference type="ChEBI" id="CHEBI:30616"/>
    </ligand>
</feature>
<feature type="binding site" evidence="1">
    <location>
        <begin position="417"/>
        <end position="422"/>
    </location>
    <ligand>
        <name>ATP</name>
        <dbReference type="ChEBI" id="CHEBI:30616"/>
    </ligand>
</feature>
<feature type="binding site" evidence="1">
    <location>
        <position position="510"/>
    </location>
    <ligand>
        <name>ATP</name>
        <dbReference type="ChEBI" id="CHEBI:30616"/>
    </ligand>
</feature>
<feature type="binding site" evidence="1">
    <location>
        <position position="525"/>
    </location>
    <ligand>
        <name>ATP</name>
        <dbReference type="ChEBI" id="CHEBI:30616"/>
    </ligand>
</feature>
<feature type="binding site" evidence="1">
    <location>
        <position position="533"/>
    </location>
    <ligand>
        <name>CoA</name>
        <dbReference type="ChEBI" id="CHEBI:57287"/>
    </ligand>
</feature>
<feature type="binding site" evidence="1">
    <location>
        <position position="536"/>
    </location>
    <ligand>
        <name>ATP</name>
        <dbReference type="ChEBI" id="CHEBI:30616"/>
    </ligand>
</feature>
<feature type="binding site" evidence="1">
    <location>
        <position position="549"/>
    </location>
    <ligand>
        <name>Mg(2+)</name>
        <dbReference type="ChEBI" id="CHEBI:18420"/>
    </ligand>
</feature>
<feature type="binding site" evidence="1">
    <location>
        <position position="552"/>
    </location>
    <ligand>
        <name>Mg(2+)</name>
        <dbReference type="ChEBI" id="CHEBI:18420"/>
    </ligand>
</feature>
<feature type="modified residue" description="N6-acetyllysine" evidence="1">
    <location>
        <position position="623"/>
    </location>
</feature>
<protein>
    <recommendedName>
        <fullName evidence="1">Acetyl-coenzyme A synthetase</fullName>
        <shortName evidence="1">AcCoA synthetase</shortName>
        <shortName evidence="1">Acs</shortName>
        <ecNumber evidence="1">6.2.1.1</ecNumber>
    </recommendedName>
    <alternativeName>
        <fullName evidence="1">Acetate--CoA ligase</fullName>
    </alternativeName>
    <alternativeName>
        <fullName evidence="1">Acyl-activating enzyme</fullName>
    </alternativeName>
</protein>
<name>ACSA_HELP2</name>
<evidence type="ECO:0000255" key="1">
    <source>
        <dbReference type="HAMAP-Rule" id="MF_01123"/>
    </source>
</evidence>
<accession>B6JKX8</accession>
<keyword id="KW-0007">Acetylation</keyword>
<keyword id="KW-0067">ATP-binding</keyword>
<keyword id="KW-0436">Ligase</keyword>
<keyword id="KW-0460">Magnesium</keyword>
<keyword id="KW-0479">Metal-binding</keyword>
<keyword id="KW-0547">Nucleotide-binding</keyword>
<organism>
    <name type="scientific">Helicobacter pylori (strain P12)</name>
    <dbReference type="NCBI Taxonomy" id="570508"/>
    <lineage>
        <taxon>Bacteria</taxon>
        <taxon>Pseudomonadati</taxon>
        <taxon>Campylobacterota</taxon>
        <taxon>Epsilonproteobacteria</taxon>
        <taxon>Campylobacterales</taxon>
        <taxon>Helicobacteraceae</taxon>
        <taxon>Helicobacter</taxon>
    </lineage>
</organism>
<comment type="function">
    <text evidence="1">Catalyzes the conversion of acetate into acetyl-CoA (AcCoA), an essential intermediate at the junction of anabolic and catabolic pathways. AcsA undergoes a two-step reaction. In the first half reaction, AcsA combines acetate with ATP to form acetyl-adenylate (AcAMP) intermediate. In the second half reaction, it can then transfer the acetyl group from AcAMP to the sulfhydryl group of CoA, forming the product AcCoA.</text>
</comment>
<comment type="catalytic activity">
    <reaction evidence="1">
        <text>acetate + ATP + CoA = acetyl-CoA + AMP + diphosphate</text>
        <dbReference type="Rhea" id="RHEA:23176"/>
        <dbReference type="ChEBI" id="CHEBI:30089"/>
        <dbReference type="ChEBI" id="CHEBI:30616"/>
        <dbReference type="ChEBI" id="CHEBI:33019"/>
        <dbReference type="ChEBI" id="CHEBI:57287"/>
        <dbReference type="ChEBI" id="CHEBI:57288"/>
        <dbReference type="ChEBI" id="CHEBI:456215"/>
        <dbReference type="EC" id="6.2.1.1"/>
    </reaction>
</comment>
<comment type="cofactor">
    <cofactor evidence="1">
        <name>Mg(2+)</name>
        <dbReference type="ChEBI" id="CHEBI:18420"/>
    </cofactor>
</comment>
<comment type="PTM">
    <text evidence="1">Acetylated. Deacetylation by the SIR2-homolog deacetylase activates the enzyme.</text>
</comment>
<comment type="similarity">
    <text evidence="1">Belongs to the ATP-dependent AMP-binding enzyme family.</text>
</comment>
<gene>
    <name evidence="1" type="primary">acsA</name>
    <name type="ordered locus">HPP12_0399</name>
</gene>